<name>MYF6_MOUSE</name>
<proteinExistence type="evidence at transcript level"/>
<comment type="function">
    <text>Involved in muscle differentiation (myogenic factor). Induces fibroblasts to differentiate into myoblasts. Probable sequence specific DNA-binding protein.</text>
</comment>
<comment type="subunit">
    <text evidence="1">Efficient DNA binding requires dimerization with another bHLH protein. Interacts with CSRP3.</text>
</comment>
<comment type="subcellular location">
    <subcellularLocation>
        <location>Nucleus</location>
    </subcellularLocation>
</comment>
<comment type="tissue specificity">
    <text>Skeletal muscle.</text>
</comment>
<sequence>MMMDLFETGSYFFYLDGENVTLQPLEVAEGSPLYPGSDGTLSPCQDQMPQEAGSDSSGEEHVLAPPGLQPPHCPGQCLIWACKTCKRKSAPTDRRKAATLRERRRLKKINEAFEALKRRTVANPNQRLPKVEILRSAISYIERLQDLLHRLDQQEKMQELGVDPYSYKPKQEILEGADFLRTCSPQWPSVSDHSRGLVITAKEGGANVDASASSSLQRLSSIVDSISSEERKLPSVEEVVEK</sequence>
<gene>
    <name type="primary">Myf6</name>
    <name type="synonym">Mrf4</name>
    <name type="synonym">Myf-6</name>
</gene>
<reference key="1">
    <citation type="journal article" date="1990" name="Proc. Natl. Acad. Sci. U.S.A.">
        <title>Herculin, a fourth member of the MyoD family of myogenic regulatory genes.</title>
        <authorList>
            <person name="Miner J.H."/>
            <person name="Wold B."/>
        </authorList>
    </citation>
    <scope>NUCLEOTIDE SEQUENCE [GENOMIC DNA]</scope>
    <source>
        <strain>BALB/c Charon 4A</strain>
        <tissue>Spleen</tissue>
    </source>
</reference>
<reference key="2">
    <citation type="journal article" date="1991" name="J. Cell Biol.">
        <title>The muscle regulatory gene, Myf-6, has a biphasic pattern of expression during early mouse development.</title>
        <authorList>
            <person name="Bober E."/>
            <person name="Lyons G.L."/>
            <person name="Braun T."/>
            <person name="Cossu G."/>
            <person name="Buckingham M."/>
            <person name="Arnold H.-H."/>
        </authorList>
    </citation>
    <scope>NUCLEOTIDE SEQUENCE</scope>
    <source>
        <tissue>Skeletal muscle</tissue>
    </source>
</reference>
<reference key="3">
    <citation type="journal article" date="2005" name="Science">
        <title>The transcriptional landscape of the mammalian genome.</title>
        <authorList>
            <person name="Carninci P."/>
            <person name="Kasukawa T."/>
            <person name="Katayama S."/>
            <person name="Gough J."/>
            <person name="Frith M.C."/>
            <person name="Maeda N."/>
            <person name="Oyama R."/>
            <person name="Ravasi T."/>
            <person name="Lenhard B."/>
            <person name="Wells C."/>
            <person name="Kodzius R."/>
            <person name="Shimokawa K."/>
            <person name="Bajic V.B."/>
            <person name="Brenner S.E."/>
            <person name="Batalov S."/>
            <person name="Forrest A.R."/>
            <person name="Zavolan M."/>
            <person name="Davis M.J."/>
            <person name="Wilming L.G."/>
            <person name="Aidinis V."/>
            <person name="Allen J.E."/>
            <person name="Ambesi-Impiombato A."/>
            <person name="Apweiler R."/>
            <person name="Aturaliya R.N."/>
            <person name="Bailey T.L."/>
            <person name="Bansal M."/>
            <person name="Baxter L."/>
            <person name="Beisel K.W."/>
            <person name="Bersano T."/>
            <person name="Bono H."/>
            <person name="Chalk A.M."/>
            <person name="Chiu K.P."/>
            <person name="Choudhary V."/>
            <person name="Christoffels A."/>
            <person name="Clutterbuck D.R."/>
            <person name="Crowe M.L."/>
            <person name="Dalla E."/>
            <person name="Dalrymple B.P."/>
            <person name="de Bono B."/>
            <person name="Della Gatta G."/>
            <person name="di Bernardo D."/>
            <person name="Down T."/>
            <person name="Engstrom P."/>
            <person name="Fagiolini M."/>
            <person name="Faulkner G."/>
            <person name="Fletcher C.F."/>
            <person name="Fukushima T."/>
            <person name="Furuno M."/>
            <person name="Futaki S."/>
            <person name="Gariboldi M."/>
            <person name="Georgii-Hemming P."/>
            <person name="Gingeras T.R."/>
            <person name="Gojobori T."/>
            <person name="Green R.E."/>
            <person name="Gustincich S."/>
            <person name="Harbers M."/>
            <person name="Hayashi Y."/>
            <person name="Hensch T.K."/>
            <person name="Hirokawa N."/>
            <person name="Hill D."/>
            <person name="Huminiecki L."/>
            <person name="Iacono M."/>
            <person name="Ikeo K."/>
            <person name="Iwama A."/>
            <person name="Ishikawa T."/>
            <person name="Jakt M."/>
            <person name="Kanapin A."/>
            <person name="Katoh M."/>
            <person name="Kawasawa Y."/>
            <person name="Kelso J."/>
            <person name="Kitamura H."/>
            <person name="Kitano H."/>
            <person name="Kollias G."/>
            <person name="Krishnan S.P."/>
            <person name="Kruger A."/>
            <person name="Kummerfeld S.K."/>
            <person name="Kurochkin I.V."/>
            <person name="Lareau L.F."/>
            <person name="Lazarevic D."/>
            <person name="Lipovich L."/>
            <person name="Liu J."/>
            <person name="Liuni S."/>
            <person name="McWilliam S."/>
            <person name="Madan Babu M."/>
            <person name="Madera M."/>
            <person name="Marchionni L."/>
            <person name="Matsuda H."/>
            <person name="Matsuzawa S."/>
            <person name="Miki H."/>
            <person name="Mignone F."/>
            <person name="Miyake S."/>
            <person name="Morris K."/>
            <person name="Mottagui-Tabar S."/>
            <person name="Mulder N."/>
            <person name="Nakano N."/>
            <person name="Nakauchi H."/>
            <person name="Ng P."/>
            <person name="Nilsson R."/>
            <person name="Nishiguchi S."/>
            <person name="Nishikawa S."/>
            <person name="Nori F."/>
            <person name="Ohara O."/>
            <person name="Okazaki Y."/>
            <person name="Orlando V."/>
            <person name="Pang K.C."/>
            <person name="Pavan W.J."/>
            <person name="Pavesi G."/>
            <person name="Pesole G."/>
            <person name="Petrovsky N."/>
            <person name="Piazza S."/>
            <person name="Reed J."/>
            <person name="Reid J.F."/>
            <person name="Ring B.Z."/>
            <person name="Ringwald M."/>
            <person name="Rost B."/>
            <person name="Ruan Y."/>
            <person name="Salzberg S.L."/>
            <person name="Sandelin A."/>
            <person name="Schneider C."/>
            <person name="Schoenbach C."/>
            <person name="Sekiguchi K."/>
            <person name="Semple C.A."/>
            <person name="Seno S."/>
            <person name="Sessa L."/>
            <person name="Sheng Y."/>
            <person name="Shibata Y."/>
            <person name="Shimada H."/>
            <person name="Shimada K."/>
            <person name="Silva D."/>
            <person name="Sinclair B."/>
            <person name="Sperling S."/>
            <person name="Stupka E."/>
            <person name="Sugiura K."/>
            <person name="Sultana R."/>
            <person name="Takenaka Y."/>
            <person name="Taki K."/>
            <person name="Tammoja K."/>
            <person name="Tan S.L."/>
            <person name="Tang S."/>
            <person name="Taylor M.S."/>
            <person name="Tegner J."/>
            <person name="Teichmann S.A."/>
            <person name="Ueda H.R."/>
            <person name="van Nimwegen E."/>
            <person name="Verardo R."/>
            <person name="Wei C.L."/>
            <person name="Yagi K."/>
            <person name="Yamanishi H."/>
            <person name="Zabarovsky E."/>
            <person name="Zhu S."/>
            <person name="Zimmer A."/>
            <person name="Hide W."/>
            <person name="Bult C."/>
            <person name="Grimmond S.M."/>
            <person name="Teasdale R.D."/>
            <person name="Liu E.T."/>
            <person name="Brusic V."/>
            <person name="Quackenbush J."/>
            <person name="Wahlestedt C."/>
            <person name="Mattick J.S."/>
            <person name="Hume D.A."/>
            <person name="Kai C."/>
            <person name="Sasaki D."/>
            <person name="Tomaru Y."/>
            <person name="Fukuda S."/>
            <person name="Kanamori-Katayama M."/>
            <person name="Suzuki M."/>
            <person name="Aoki J."/>
            <person name="Arakawa T."/>
            <person name="Iida J."/>
            <person name="Imamura K."/>
            <person name="Itoh M."/>
            <person name="Kato T."/>
            <person name="Kawaji H."/>
            <person name="Kawagashira N."/>
            <person name="Kawashima T."/>
            <person name="Kojima M."/>
            <person name="Kondo S."/>
            <person name="Konno H."/>
            <person name="Nakano K."/>
            <person name="Ninomiya N."/>
            <person name="Nishio T."/>
            <person name="Okada M."/>
            <person name="Plessy C."/>
            <person name="Shibata K."/>
            <person name="Shiraki T."/>
            <person name="Suzuki S."/>
            <person name="Tagami M."/>
            <person name="Waki K."/>
            <person name="Watahiki A."/>
            <person name="Okamura-Oho Y."/>
            <person name="Suzuki H."/>
            <person name="Kawai J."/>
            <person name="Hayashizaki Y."/>
        </authorList>
    </citation>
    <scope>NUCLEOTIDE SEQUENCE [LARGE SCALE MRNA]</scope>
    <source>
        <strain>C57BL/6J</strain>
        <tissue>Head</tissue>
    </source>
</reference>
<dbReference type="EMBL" id="M30499">
    <property type="protein sequence ID" value="AAA37802.1"/>
    <property type="molecule type" value="Genomic_DNA"/>
</dbReference>
<dbReference type="EMBL" id="X59060">
    <property type="protein sequence ID" value="CAA41785.1"/>
    <property type="molecule type" value="mRNA"/>
</dbReference>
<dbReference type="EMBL" id="AK029370">
    <property type="protein sequence ID" value="BAC26423.1"/>
    <property type="molecule type" value="mRNA"/>
</dbReference>
<dbReference type="CCDS" id="CCDS24162.1"/>
<dbReference type="PIR" id="A34872">
    <property type="entry name" value="A34872"/>
</dbReference>
<dbReference type="RefSeq" id="NP_032683.1">
    <property type="nucleotide sequence ID" value="NM_008657.3"/>
</dbReference>
<dbReference type="SMR" id="P15375"/>
<dbReference type="FunCoup" id="P15375">
    <property type="interactions" value="1364"/>
</dbReference>
<dbReference type="IntAct" id="P15375">
    <property type="interactions" value="1"/>
</dbReference>
<dbReference type="MINT" id="P15375"/>
<dbReference type="STRING" id="10090.ENSMUSP00000047529"/>
<dbReference type="iPTMnet" id="P15375"/>
<dbReference type="PhosphoSitePlus" id="P15375"/>
<dbReference type="PaxDb" id="10090-ENSMUSP00000047529"/>
<dbReference type="ProteomicsDB" id="287569"/>
<dbReference type="Antibodypedia" id="17294">
    <property type="antibodies" value="254 antibodies from 32 providers"/>
</dbReference>
<dbReference type="DNASU" id="17878"/>
<dbReference type="Ensembl" id="ENSMUST00000044210.5">
    <property type="protein sequence ID" value="ENSMUSP00000047529.4"/>
    <property type="gene ID" value="ENSMUSG00000035923.5"/>
</dbReference>
<dbReference type="GeneID" id="17878"/>
<dbReference type="KEGG" id="mmu:17878"/>
<dbReference type="UCSC" id="uc007gza.1">
    <property type="organism name" value="mouse"/>
</dbReference>
<dbReference type="AGR" id="MGI:97253"/>
<dbReference type="CTD" id="4618"/>
<dbReference type="MGI" id="MGI:97253">
    <property type="gene designation" value="Myf6"/>
</dbReference>
<dbReference type="VEuPathDB" id="HostDB:ENSMUSG00000035923"/>
<dbReference type="eggNOG" id="KOG3960">
    <property type="taxonomic scope" value="Eukaryota"/>
</dbReference>
<dbReference type="GeneTree" id="ENSGT00950000182959"/>
<dbReference type="HOGENOM" id="CLU_100258_0_0_1"/>
<dbReference type="InParanoid" id="P15375"/>
<dbReference type="OMA" id="SPCQDQI"/>
<dbReference type="OrthoDB" id="10049614at2759"/>
<dbReference type="PhylomeDB" id="P15375"/>
<dbReference type="TreeFam" id="TF316344"/>
<dbReference type="Reactome" id="R-MMU-525793">
    <property type="pathway name" value="Myogenesis"/>
</dbReference>
<dbReference type="BioGRID-ORCS" id="17878">
    <property type="hits" value="5 hits in 77 CRISPR screens"/>
</dbReference>
<dbReference type="PRO" id="PR:P15375"/>
<dbReference type="Proteomes" id="UP000000589">
    <property type="component" value="Chromosome 10"/>
</dbReference>
<dbReference type="RNAct" id="P15375">
    <property type="molecule type" value="protein"/>
</dbReference>
<dbReference type="Bgee" id="ENSMUSG00000035923">
    <property type="expression patterns" value="Expressed in hindlimb stylopod muscle and 87 other cell types or tissues"/>
</dbReference>
<dbReference type="ExpressionAtlas" id="P15375">
    <property type="expression patterns" value="baseline and differential"/>
</dbReference>
<dbReference type="GO" id="GO:0005829">
    <property type="term" value="C:cytosol"/>
    <property type="evidence" value="ECO:0007669"/>
    <property type="project" value="Ensembl"/>
</dbReference>
<dbReference type="GO" id="GO:0072686">
    <property type="term" value="C:mitotic spindle"/>
    <property type="evidence" value="ECO:0007669"/>
    <property type="project" value="Ensembl"/>
</dbReference>
<dbReference type="GO" id="GO:0005654">
    <property type="term" value="C:nucleoplasm"/>
    <property type="evidence" value="ECO:0007669"/>
    <property type="project" value="Ensembl"/>
</dbReference>
<dbReference type="GO" id="GO:0005634">
    <property type="term" value="C:nucleus"/>
    <property type="evidence" value="ECO:0000304"/>
    <property type="project" value="MGI"/>
</dbReference>
<dbReference type="GO" id="GO:0001228">
    <property type="term" value="F:DNA-binding transcription activator activity, RNA polymerase II-specific"/>
    <property type="evidence" value="ECO:0000314"/>
    <property type="project" value="MGI"/>
</dbReference>
<dbReference type="GO" id="GO:0000981">
    <property type="term" value="F:DNA-binding transcription factor activity, RNA polymerase II-specific"/>
    <property type="evidence" value="ECO:0000304"/>
    <property type="project" value="MGI"/>
</dbReference>
<dbReference type="GO" id="GO:0046983">
    <property type="term" value="F:protein dimerization activity"/>
    <property type="evidence" value="ECO:0007669"/>
    <property type="project" value="InterPro"/>
</dbReference>
<dbReference type="GO" id="GO:1990837">
    <property type="term" value="F:sequence-specific double-stranded DNA binding"/>
    <property type="evidence" value="ECO:0007669"/>
    <property type="project" value="Ensembl"/>
</dbReference>
<dbReference type="GO" id="GO:0060415">
    <property type="term" value="P:muscle tissue morphogenesis"/>
    <property type="evidence" value="ECO:0000315"/>
    <property type="project" value="MGI"/>
</dbReference>
<dbReference type="GO" id="GO:0045892">
    <property type="term" value="P:negative regulation of DNA-templated transcription"/>
    <property type="evidence" value="ECO:0000315"/>
    <property type="project" value="MGI"/>
</dbReference>
<dbReference type="GO" id="GO:0045893">
    <property type="term" value="P:positive regulation of DNA-templated transcription"/>
    <property type="evidence" value="ECO:0000315"/>
    <property type="project" value="MGI"/>
</dbReference>
<dbReference type="GO" id="GO:0035914">
    <property type="term" value="P:skeletal muscle cell differentiation"/>
    <property type="evidence" value="ECO:0000315"/>
    <property type="project" value="MGI"/>
</dbReference>
<dbReference type="GO" id="GO:0007519">
    <property type="term" value="P:skeletal muscle tissue development"/>
    <property type="evidence" value="ECO:0000315"/>
    <property type="project" value="MGI"/>
</dbReference>
<dbReference type="GO" id="GO:0043403">
    <property type="term" value="P:skeletal muscle tissue regeneration"/>
    <property type="evidence" value="ECO:0007669"/>
    <property type="project" value="Ensembl"/>
</dbReference>
<dbReference type="GO" id="GO:0001756">
    <property type="term" value="P:somitogenesis"/>
    <property type="evidence" value="ECO:0000315"/>
    <property type="project" value="MGI"/>
</dbReference>
<dbReference type="CDD" id="cd18934">
    <property type="entry name" value="bHLH_TS_MRF4_Myf6"/>
    <property type="match status" value="1"/>
</dbReference>
<dbReference type="FunFam" id="4.10.280.10:FF:000005">
    <property type="entry name" value="Myogenic factor"/>
    <property type="match status" value="1"/>
</dbReference>
<dbReference type="Gene3D" id="4.10.280.10">
    <property type="entry name" value="Helix-loop-helix DNA-binding domain"/>
    <property type="match status" value="1"/>
</dbReference>
<dbReference type="InterPro" id="IPR011598">
    <property type="entry name" value="bHLH_dom"/>
</dbReference>
<dbReference type="InterPro" id="IPR036638">
    <property type="entry name" value="HLH_DNA-bd_sf"/>
</dbReference>
<dbReference type="InterPro" id="IPR002546">
    <property type="entry name" value="MyoD_N"/>
</dbReference>
<dbReference type="InterPro" id="IPR039704">
    <property type="entry name" value="Myogenic_factor"/>
</dbReference>
<dbReference type="PANTHER" id="PTHR11534">
    <property type="entry name" value="MYOGENIC FACTOR"/>
    <property type="match status" value="1"/>
</dbReference>
<dbReference type="PANTHER" id="PTHR11534:SF4">
    <property type="entry name" value="MYOGENIC FACTOR 6"/>
    <property type="match status" value="1"/>
</dbReference>
<dbReference type="Pfam" id="PF01586">
    <property type="entry name" value="Basic"/>
    <property type="match status" value="1"/>
</dbReference>
<dbReference type="Pfam" id="PF00010">
    <property type="entry name" value="HLH"/>
    <property type="match status" value="1"/>
</dbReference>
<dbReference type="SMART" id="SM00520">
    <property type="entry name" value="BASIC"/>
    <property type="match status" value="1"/>
</dbReference>
<dbReference type="SMART" id="SM00353">
    <property type="entry name" value="HLH"/>
    <property type="match status" value="1"/>
</dbReference>
<dbReference type="SUPFAM" id="SSF47459">
    <property type="entry name" value="HLH, helix-loop-helix DNA-binding domain"/>
    <property type="match status" value="1"/>
</dbReference>
<dbReference type="PROSITE" id="PS50888">
    <property type="entry name" value="BHLH"/>
    <property type="match status" value="1"/>
</dbReference>
<accession>P15375</accession>
<feature type="chain" id="PRO_0000127352" description="Myogenic factor 6">
    <location>
        <begin position="1"/>
        <end position="242"/>
    </location>
</feature>
<feature type="domain" description="bHLH" evidence="2">
    <location>
        <begin position="93"/>
        <end position="144"/>
    </location>
</feature>
<feature type="region of interest" description="Disordered" evidence="3">
    <location>
        <begin position="31"/>
        <end position="63"/>
    </location>
</feature>
<feature type="compositionally biased region" description="Polar residues" evidence="3">
    <location>
        <begin position="39"/>
        <end position="56"/>
    </location>
</feature>
<protein>
    <recommendedName>
        <fullName>Myogenic factor 6</fullName>
        <shortName>Myf-6</shortName>
    </recommendedName>
    <alternativeName>
        <fullName>Herculin</fullName>
    </alternativeName>
    <alternativeName>
        <fullName>Muscle-specific regulatory factor 4</fullName>
    </alternativeName>
</protein>
<evidence type="ECO:0000250" key="1">
    <source>
        <dbReference type="UniProtKB" id="P19335"/>
    </source>
</evidence>
<evidence type="ECO:0000255" key="2">
    <source>
        <dbReference type="PROSITE-ProRule" id="PRU00981"/>
    </source>
</evidence>
<evidence type="ECO:0000256" key="3">
    <source>
        <dbReference type="SAM" id="MobiDB-lite"/>
    </source>
</evidence>
<keyword id="KW-0217">Developmental protein</keyword>
<keyword id="KW-0221">Differentiation</keyword>
<keyword id="KW-0238">DNA-binding</keyword>
<keyword id="KW-0517">Myogenesis</keyword>
<keyword id="KW-0539">Nucleus</keyword>
<keyword id="KW-1185">Reference proteome</keyword>
<organism>
    <name type="scientific">Mus musculus</name>
    <name type="common">Mouse</name>
    <dbReference type="NCBI Taxonomy" id="10090"/>
    <lineage>
        <taxon>Eukaryota</taxon>
        <taxon>Metazoa</taxon>
        <taxon>Chordata</taxon>
        <taxon>Craniata</taxon>
        <taxon>Vertebrata</taxon>
        <taxon>Euteleostomi</taxon>
        <taxon>Mammalia</taxon>
        <taxon>Eutheria</taxon>
        <taxon>Euarchontoglires</taxon>
        <taxon>Glires</taxon>
        <taxon>Rodentia</taxon>
        <taxon>Myomorpha</taxon>
        <taxon>Muroidea</taxon>
        <taxon>Muridae</taxon>
        <taxon>Murinae</taxon>
        <taxon>Mus</taxon>
        <taxon>Mus</taxon>
    </lineage>
</organism>